<protein>
    <recommendedName>
        <fullName>Magnesium transporter MRS2-E</fullName>
    </recommendedName>
</protein>
<name>MRS2E_ORYSI</name>
<gene>
    <name type="primary">MRS2-E</name>
    <name type="ORF">OsI_04582</name>
</gene>
<sequence length="418" mass="46401">MERRAQPVSAAVAPVTGRRKGAAASRKWMVVPAVGEERRVEFGKHQIMKMTGLPGRDLRVLDPVLSYPSTILGRDRAIVVRLQGVKAIITATEVLVPDHDDVLLASFLLDLRSRLSLPDAAPSTNPAAADRGNGTEQGDQGSVPGLAISGAGNAKIPPFEFKVLEVCLEHACKDLESQTRSLEKEAYPALDKLGSKVSTLNLDHVRNLKSRMVDLSGRVQKIRDELEHLLDDDMDMSEMYLTRKLSFQGLSGSLSRADSHKYASVDHDDDREEEDHDDETESGRESSVYVKPDIEELEMLLEAYFVQIDGTLNTLYHIREYADDTEDYINIMLDEKQNQLLQMGVMLTTATVVVTAGIVVVSLFGMNIHIDLMKDPETPEMVRMSNMHFWETTFGTVAGCIAIYLLAIYAGRKSKILQ</sequence>
<dbReference type="EMBL" id="CM000126">
    <property type="protein sequence ID" value="EAY76629.1"/>
    <property type="molecule type" value="Genomic_DNA"/>
</dbReference>
<dbReference type="SMR" id="A2WXD3"/>
<dbReference type="STRING" id="39946.A2WXD3"/>
<dbReference type="EnsemblPlants" id="BGIOSGA004878-TA">
    <property type="protein sequence ID" value="BGIOSGA004878-PA"/>
    <property type="gene ID" value="BGIOSGA004878"/>
</dbReference>
<dbReference type="Gramene" id="BGIOSGA004878-TA">
    <property type="protein sequence ID" value="BGIOSGA004878-PA"/>
    <property type="gene ID" value="BGIOSGA004878"/>
</dbReference>
<dbReference type="HOGENOM" id="CLU_034694_0_0_1"/>
<dbReference type="OMA" id="FWETTCG"/>
<dbReference type="Proteomes" id="UP000007015">
    <property type="component" value="Chromosome 1"/>
</dbReference>
<dbReference type="GO" id="GO:0016020">
    <property type="term" value="C:membrane"/>
    <property type="evidence" value="ECO:0007669"/>
    <property type="project" value="UniProtKB-SubCell"/>
</dbReference>
<dbReference type="GO" id="GO:0015095">
    <property type="term" value="F:magnesium ion transmembrane transporter activity"/>
    <property type="evidence" value="ECO:0007669"/>
    <property type="project" value="TreeGrafter"/>
</dbReference>
<dbReference type="CDD" id="cd12823">
    <property type="entry name" value="Mrs2_Mfm1p-like"/>
    <property type="match status" value="1"/>
</dbReference>
<dbReference type="FunFam" id="2.40.128.330:FF:000001">
    <property type="entry name" value="Magnesium transporter MRS2-1"/>
    <property type="match status" value="1"/>
</dbReference>
<dbReference type="Gene3D" id="2.40.128.330">
    <property type="match status" value="1"/>
</dbReference>
<dbReference type="Gene3D" id="1.20.58.340">
    <property type="entry name" value="Magnesium transport protein CorA, transmembrane region"/>
    <property type="match status" value="1"/>
</dbReference>
<dbReference type="InterPro" id="IPR039204">
    <property type="entry name" value="MRS2-like"/>
</dbReference>
<dbReference type="PANTHER" id="PTHR13890:SF34">
    <property type="entry name" value="MAGNESIUM TRANSPORTER MRS2-E"/>
    <property type="match status" value="1"/>
</dbReference>
<dbReference type="PANTHER" id="PTHR13890">
    <property type="entry name" value="RNA SPLICING PROTEIN MRS2, MITOCHONDRIAL"/>
    <property type="match status" value="1"/>
</dbReference>
<dbReference type="Pfam" id="PF22099">
    <property type="entry name" value="MRS2-like"/>
    <property type="match status" value="2"/>
</dbReference>
<organism>
    <name type="scientific">Oryza sativa subsp. indica</name>
    <name type="common">Rice</name>
    <dbReference type="NCBI Taxonomy" id="39946"/>
    <lineage>
        <taxon>Eukaryota</taxon>
        <taxon>Viridiplantae</taxon>
        <taxon>Streptophyta</taxon>
        <taxon>Embryophyta</taxon>
        <taxon>Tracheophyta</taxon>
        <taxon>Spermatophyta</taxon>
        <taxon>Magnoliopsida</taxon>
        <taxon>Liliopsida</taxon>
        <taxon>Poales</taxon>
        <taxon>Poaceae</taxon>
        <taxon>BOP clade</taxon>
        <taxon>Oryzoideae</taxon>
        <taxon>Oryzeae</taxon>
        <taxon>Oryzinae</taxon>
        <taxon>Oryza</taxon>
        <taxon>Oryza sativa</taxon>
    </lineage>
</organism>
<evidence type="ECO:0000250" key="1"/>
<evidence type="ECO:0000255" key="2"/>
<evidence type="ECO:0000256" key="3">
    <source>
        <dbReference type="SAM" id="MobiDB-lite"/>
    </source>
</evidence>
<evidence type="ECO:0000305" key="4"/>
<reference key="1">
    <citation type="journal article" date="2005" name="PLoS Biol.">
        <title>The genomes of Oryza sativa: a history of duplications.</title>
        <authorList>
            <person name="Yu J."/>
            <person name="Wang J."/>
            <person name="Lin W."/>
            <person name="Li S."/>
            <person name="Li H."/>
            <person name="Zhou J."/>
            <person name="Ni P."/>
            <person name="Dong W."/>
            <person name="Hu S."/>
            <person name="Zeng C."/>
            <person name="Zhang J."/>
            <person name="Zhang Y."/>
            <person name="Li R."/>
            <person name="Xu Z."/>
            <person name="Li S."/>
            <person name="Li X."/>
            <person name="Zheng H."/>
            <person name="Cong L."/>
            <person name="Lin L."/>
            <person name="Yin J."/>
            <person name="Geng J."/>
            <person name="Li G."/>
            <person name="Shi J."/>
            <person name="Liu J."/>
            <person name="Lv H."/>
            <person name="Li J."/>
            <person name="Wang J."/>
            <person name="Deng Y."/>
            <person name="Ran L."/>
            <person name="Shi X."/>
            <person name="Wang X."/>
            <person name="Wu Q."/>
            <person name="Li C."/>
            <person name="Ren X."/>
            <person name="Wang J."/>
            <person name="Wang X."/>
            <person name="Li D."/>
            <person name="Liu D."/>
            <person name="Zhang X."/>
            <person name="Ji Z."/>
            <person name="Zhao W."/>
            <person name="Sun Y."/>
            <person name="Zhang Z."/>
            <person name="Bao J."/>
            <person name="Han Y."/>
            <person name="Dong L."/>
            <person name="Ji J."/>
            <person name="Chen P."/>
            <person name="Wu S."/>
            <person name="Liu J."/>
            <person name="Xiao Y."/>
            <person name="Bu D."/>
            <person name="Tan J."/>
            <person name="Yang L."/>
            <person name="Ye C."/>
            <person name="Zhang J."/>
            <person name="Xu J."/>
            <person name="Zhou Y."/>
            <person name="Yu Y."/>
            <person name="Zhang B."/>
            <person name="Zhuang S."/>
            <person name="Wei H."/>
            <person name="Liu B."/>
            <person name="Lei M."/>
            <person name="Yu H."/>
            <person name="Li Y."/>
            <person name="Xu H."/>
            <person name="Wei S."/>
            <person name="He X."/>
            <person name="Fang L."/>
            <person name="Zhang Z."/>
            <person name="Zhang Y."/>
            <person name="Huang X."/>
            <person name="Su Z."/>
            <person name="Tong W."/>
            <person name="Li J."/>
            <person name="Tong Z."/>
            <person name="Li S."/>
            <person name="Ye J."/>
            <person name="Wang L."/>
            <person name="Fang L."/>
            <person name="Lei T."/>
            <person name="Chen C.-S."/>
            <person name="Chen H.-C."/>
            <person name="Xu Z."/>
            <person name="Li H."/>
            <person name="Huang H."/>
            <person name="Zhang F."/>
            <person name="Xu H."/>
            <person name="Li N."/>
            <person name="Zhao C."/>
            <person name="Li S."/>
            <person name="Dong L."/>
            <person name="Huang Y."/>
            <person name="Li L."/>
            <person name="Xi Y."/>
            <person name="Qi Q."/>
            <person name="Li W."/>
            <person name="Zhang B."/>
            <person name="Hu W."/>
            <person name="Zhang Y."/>
            <person name="Tian X."/>
            <person name="Jiao Y."/>
            <person name="Liang X."/>
            <person name="Jin J."/>
            <person name="Gao L."/>
            <person name="Zheng W."/>
            <person name="Hao B."/>
            <person name="Liu S.-M."/>
            <person name="Wang W."/>
            <person name="Yuan L."/>
            <person name="Cao M."/>
            <person name="McDermott J."/>
            <person name="Samudrala R."/>
            <person name="Wang J."/>
            <person name="Wong G.K.-S."/>
            <person name="Yang H."/>
        </authorList>
    </citation>
    <scope>NUCLEOTIDE SEQUENCE [LARGE SCALE GENOMIC DNA]</scope>
    <source>
        <strain>cv. 93-11</strain>
    </source>
</reference>
<proteinExistence type="inferred from homology"/>
<feature type="chain" id="PRO_0000394274" description="Magnesium transporter MRS2-E">
    <location>
        <begin position="1"/>
        <end position="418"/>
    </location>
</feature>
<feature type="transmembrane region" description="Helical" evidence="2">
    <location>
        <begin position="344"/>
        <end position="364"/>
    </location>
</feature>
<feature type="transmembrane region" description="Helical" evidence="2">
    <location>
        <begin position="389"/>
        <end position="409"/>
    </location>
</feature>
<feature type="region of interest" description="Disordered" evidence="3">
    <location>
        <begin position="119"/>
        <end position="146"/>
    </location>
</feature>
<feature type="region of interest" description="Disordered" evidence="3">
    <location>
        <begin position="258"/>
        <end position="287"/>
    </location>
</feature>
<feature type="coiled-coil region" evidence="2">
    <location>
        <begin position="166"/>
        <end position="232"/>
    </location>
</feature>
<feature type="short sequence motif" description="Required for magnesium transport activity">
    <location>
        <begin position="365"/>
        <end position="367"/>
    </location>
</feature>
<feature type="compositionally biased region" description="Basic and acidic residues" evidence="3">
    <location>
        <begin position="258"/>
        <end position="268"/>
    </location>
</feature>
<feature type="compositionally biased region" description="Acidic residues" evidence="3">
    <location>
        <begin position="269"/>
        <end position="280"/>
    </location>
</feature>
<accession>A2WXD3</accession>
<comment type="function">
    <text evidence="1">Magnesium transporter that may mediate the influx of magnesium.</text>
</comment>
<comment type="subcellular location">
    <subcellularLocation>
        <location evidence="1">Membrane</location>
        <topology evidence="1">Multi-pass membrane protein</topology>
    </subcellularLocation>
</comment>
<comment type="similarity">
    <text evidence="4">Belongs to the CorA metal ion transporter (MIT) (TC 1.A.35.5) family.</text>
</comment>
<keyword id="KW-0175">Coiled coil</keyword>
<keyword id="KW-0406">Ion transport</keyword>
<keyword id="KW-0460">Magnesium</keyword>
<keyword id="KW-0472">Membrane</keyword>
<keyword id="KW-1185">Reference proteome</keyword>
<keyword id="KW-0812">Transmembrane</keyword>
<keyword id="KW-1133">Transmembrane helix</keyword>
<keyword id="KW-0813">Transport</keyword>